<evidence type="ECO:0000250" key="1"/>
<evidence type="ECO:0000256" key="2">
    <source>
        <dbReference type="SAM" id="MobiDB-lite"/>
    </source>
</evidence>
<evidence type="ECO:0000305" key="3"/>
<dbReference type="EMBL" id="AAFI02000063">
    <property type="protein sequence ID" value="EAL65360.1"/>
    <property type="molecule type" value="Genomic_DNA"/>
</dbReference>
<dbReference type="EMBL" id="AF018639">
    <property type="protein sequence ID" value="AAB82534.1"/>
    <property type="molecule type" value="Genomic_DNA"/>
</dbReference>
<dbReference type="RefSeq" id="XP_638758.1">
    <property type="nucleotide sequence ID" value="XM_633666.1"/>
</dbReference>
<dbReference type="SMR" id="Q54Q39"/>
<dbReference type="STRING" id="44689.Q54Q39"/>
<dbReference type="PaxDb" id="44689-DDB0191475"/>
<dbReference type="EnsemblProtists" id="EAL65360">
    <property type="protein sequence ID" value="EAL65360"/>
    <property type="gene ID" value="DDB_G0284039"/>
</dbReference>
<dbReference type="GeneID" id="8624429"/>
<dbReference type="KEGG" id="ddi:DDB_G0284039"/>
<dbReference type="dictyBase" id="DDB_G0284039">
    <property type="gene designation" value="pprA"/>
</dbReference>
<dbReference type="VEuPathDB" id="AmoebaDB:DDB_G0284039"/>
<dbReference type="eggNOG" id="KOG0531">
    <property type="taxonomic scope" value="Eukaryota"/>
</dbReference>
<dbReference type="HOGENOM" id="CLU_044236_0_0_1"/>
<dbReference type="InParanoid" id="Q54Q39"/>
<dbReference type="OMA" id="EVWASYN"/>
<dbReference type="PhylomeDB" id="Q54Q39"/>
<dbReference type="PRO" id="PR:Q54Q39"/>
<dbReference type="Proteomes" id="UP000002195">
    <property type="component" value="Chromosome 4"/>
</dbReference>
<dbReference type="GO" id="GO:0005634">
    <property type="term" value="C:nucleus"/>
    <property type="evidence" value="ECO:0007669"/>
    <property type="project" value="UniProtKB-SubCell"/>
</dbReference>
<dbReference type="FunFam" id="3.80.10.10:FF:002844">
    <property type="entry name" value="Leucine Rich Repeat family protein"/>
    <property type="match status" value="1"/>
</dbReference>
<dbReference type="FunFam" id="3.80.10.10:FF:000312">
    <property type="entry name" value="Protein phosphatases pp1 regulatory subunit, putative"/>
    <property type="match status" value="1"/>
</dbReference>
<dbReference type="Gene3D" id="3.80.10.10">
    <property type="entry name" value="Ribonuclease Inhibitor"/>
    <property type="match status" value="3"/>
</dbReference>
<dbReference type="InterPro" id="IPR001611">
    <property type="entry name" value="Leu-rich_rpt"/>
</dbReference>
<dbReference type="InterPro" id="IPR003591">
    <property type="entry name" value="Leu-rich_rpt_typical-subtyp"/>
</dbReference>
<dbReference type="InterPro" id="IPR032675">
    <property type="entry name" value="LRR_dom_sf"/>
</dbReference>
<dbReference type="InterPro" id="IPR003603">
    <property type="entry name" value="U2A'_phosphoprotein32A_C"/>
</dbReference>
<dbReference type="PANTHER" id="PTHR15454">
    <property type="entry name" value="NISCHARIN RELATED"/>
    <property type="match status" value="1"/>
</dbReference>
<dbReference type="PANTHER" id="PTHR15454:SF56">
    <property type="entry name" value="PROTEIN PHOSPHATASE 1 REGULATORY SUBUNIT 7-RELATED"/>
    <property type="match status" value="1"/>
</dbReference>
<dbReference type="Pfam" id="PF13855">
    <property type="entry name" value="LRR_8"/>
    <property type="match status" value="2"/>
</dbReference>
<dbReference type="SMART" id="SM00365">
    <property type="entry name" value="LRR_SD22"/>
    <property type="match status" value="11"/>
</dbReference>
<dbReference type="SMART" id="SM00369">
    <property type="entry name" value="LRR_TYP"/>
    <property type="match status" value="6"/>
</dbReference>
<dbReference type="SMART" id="SM00446">
    <property type="entry name" value="LRRcap"/>
    <property type="match status" value="1"/>
</dbReference>
<dbReference type="SUPFAM" id="SSF52058">
    <property type="entry name" value="L domain-like"/>
    <property type="match status" value="1"/>
</dbReference>
<dbReference type="PROSITE" id="PS51450">
    <property type="entry name" value="LRR"/>
    <property type="match status" value="10"/>
</dbReference>
<gene>
    <name type="primary">pprA</name>
    <name type="ORF">DDB_G0284039</name>
</gene>
<keyword id="KW-0433">Leucine-rich repeat</keyword>
<keyword id="KW-0539">Nucleus</keyword>
<keyword id="KW-1185">Reference proteome</keyword>
<keyword id="KW-0677">Repeat</keyword>
<organism>
    <name type="scientific">Dictyostelium discoideum</name>
    <name type="common">Social amoeba</name>
    <dbReference type="NCBI Taxonomy" id="44689"/>
    <lineage>
        <taxon>Eukaryota</taxon>
        <taxon>Amoebozoa</taxon>
        <taxon>Evosea</taxon>
        <taxon>Eumycetozoa</taxon>
        <taxon>Dictyostelia</taxon>
        <taxon>Dictyosteliales</taxon>
        <taxon>Dictyosteliaceae</taxon>
        <taxon>Dictyostelium</taxon>
    </lineage>
</organism>
<comment type="function">
    <text evidence="1">Regulatory subunit of protein phosphatase 1.</text>
</comment>
<comment type="subcellular location">
    <subcellularLocation>
        <location evidence="1">Nucleus</location>
    </subcellularLocation>
</comment>
<comment type="similarity">
    <text evidence="3">Belongs to the SDS22 family.</text>
</comment>
<sequence>MSEQNTIINSEEIKENEKIESETEEPITYLDLTGQPHTSIGDSYNIPETLLDLDLTNCKITKIENINHLKNLKKLCFRQNLIEKIENIDQLKELESLDLYDNKLQVIENIKDFQSLTYLDLSFNEIRIVENLSIKDIPKIKELYLANNKITKIENLQELVPIKNLELGSNRLREIENLENLVNIETLWLGRNKITEIKGINHLSHLRILSLQSNRLTEIGVKGLVGLNCLEELYLSHNGITDIDGLQSLKQLRTLDISANKIKTLVGLNELPDLDEIWCNDNLVDSMDNIEQQVTKSIKCLYFERNPVATHVQYRRMFINMFPQLKQLDATMVKRN</sequence>
<proteinExistence type="inferred from homology"/>
<protein>
    <recommendedName>
        <fullName>Protein phosphatase 1 regulatory subunit pprA</fullName>
    </recommendedName>
</protein>
<name>PP1R7_DICDI</name>
<accession>Q54Q39</accession>
<accession>O15732</accession>
<reference key="1">
    <citation type="journal article" date="2005" name="Nature">
        <title>The genome of the social amoeba Dictyostelium discoideum.</title>
        <authorList>
            <person name="Eichinger L."/>
            <person name="Pachebat J.A."/>
            <person name="Gloeckner G."/>
            <person name="Rajandream M.A."/>
            <person name="Sucgang R."/>
            <person name="Berriman M."/>
            <person name="Song J."/>
            <person name="Olsen R."/>
            <person name="Szafranski K."/>
            <person name="Xu Q."/>
            <person name="Tunggal B."/>
            <person name="Kummerfeld S."/>
            <person name="Madera M."/>
            <person name="Konfortov B.A."/>
            <person name="Rivero F."/>
            <person name="Bankier A.T."/>
            <person name="Lehmann R."/>
            <person name="Hamlin N."/>
            <person name="Davies R."/>
            <person name="Gaudet P."/>
            <person name="Fey P."/>
            <person name="Pilcher K."/>
            <person name="Chen G."/>
            <person name="Saunders D."/>
            <person name="Sodergren E.J."/>
            <person name="Davis P."/>
            <person name="Kerhornou A."/>
            <person name="Nie X."/>
            <person name="Hall N."/>
            <person name="Anjard C."/>
            <person name="Hemphill L."/>
            <person name="Bason N."/>
            <person name="Farbrother P."/>
            <person name="Desany B."/>
            <person name="Just E."/>
            <person name="Morio T."/>
            <person name="Rost R."/>
            <person name="Churcher C.M."/>
            <person name="Cooper J."/>
            <person name="Haydock S."/>
            <person name="van Driessche N."/>
            <person name="Cronin A."/>
            <person name="Goodhead I."/>
            <person name="Muzny D.M."/>
            <person name="Mourier T."/>
            <person name="Pain A."/>
            <person name="Lu M."/>
            <person name="Harper D."/>
            <person name="Lindsay R."/>
            <person name="Hauser H."/>
            <person name="James K.D."/>
            <person name="Quiles M."/>
            <person name="Madan Babu M."/>
            <person name="Saito T."/>
            <person name="Buchrieser C."/>
            <person name="Wardroper A."/>
            <person name="Felder M."/>
            <person name="Thangavelu M."/>
            <person name="Johnson D."/>
            <person name="Knights A."/>
            <person name="Loulseged H."/>
            <person name="Mungall K.L."/>
            <person name="Oliver K."/>
            <person name="Price C."/>
            <person name="Quail M.A."/>
            <person name="Urushihara H."/>
            <person name="Hernandez J."/>
            <person name="Rabbinowitsch E."/>
            <person name="Steffen D."/>
            <person name="Sanders M."/>
            <person name="Ma J."/>
            <person name="Kohara Y."/>
            <person name="Sharp S."/>
            <person name="Simmonds M.N."/>
            <person name="Spiegler S."/>
            <person name="Tivey A."/>
            <person name="Sugano S."/>
            <person name="White B."/>
            <person name="Walker D."/>
            <person name="Woodward J.R."/>
            <person name="Winckler T."/>
            <person name="Tanaka Y."/>
            <person name="Shaulsky G."/>
            <person name="Schleicher M."/>
            <person name="Weinstock G.M."/>
            <person name="Rosenthal A."/>
            <person name="Cox E.C."/>
            <person name="Chisholm R.L."/>
            <person name="Gibbs R.A."/>
            <person name="Loomis W.F."/>
            <person name="Platzer M."/>
            <person name="Kay R.R."/>
            <person name="Williams J.G."/>
            <person name="Dear P.H."/>
            <person name="Noegel A.A."/>
            <person name="Barrell B.G."/>
            <person name="Kuspa A."/>
        </authorList>
    </citation>
    <scope>NUCLEOTIDE SEQUENCE [LARGE SCALE GENOMIC DNA]</scope>
    <source>
        <strain>AX4</strain>
    </source>
</reference>
<reference key="2">
    <citation type="submission" date="1997-08" db="EMBL/GenBank/DDBJ databases">
        <authorList>
            <person name="Loomis W.F."/>
            <person name="Iranfar N."/>
        </authorList>
    </citation>
    <scope>NUCLEOTIDE SEQUENCE [GENOMIC DNA] OF 183-336</scope>
    <source>
        <strain>AX4</strain>
    </source>
</reference>
<feature type="chain" id="PRO_0000328155" description="Protein phosphatase 1 regulatory subunit pprA">
    <location>
        <begin position="1"/>
        <end position="336"/>
    </location>
</feature>
<feature type="repeat" description="LRR 1">
    <location>
        <begin position="26"/>
        <end position="47"/>
    </location>
</feature>
<feature type="repeat" description="LRR 2">
    <location>
        <begin position="49"/>
        <end position="70"/>
    </location>
</feature>
<feature type="repeat" description="LRR 3">
    <location>
        <begin position="71"/>
        <end position="92"/>
    </location>
</feature>
<feature type="repeat" description="LRR 4">
    <location>
        <begin position="93"/>
        <end position="114"/>
    </location>
</feature>
<feature type="repeat" description="LRR 5">
    <location>
        <begin position="115"/>
        <end position="136"/>
    </location>
</feature>
<feature type="repeat" description="LRR 6">
    <location>
        <begin position="139"/>
        <end position="160"/>
    </location>
</feature>
<feature type="repeat" description="LRR 7">
    <location>
        <begin position="161"/>
        <end position="182"/>
    </location>
</feature>
<feature type="repeat" description="LRR 8">
    <location>
        <begin position="183"/>
        <end position="204"/>
    </location>
</feature>
<feature type="repeat" description="LRR 9">
    <location>
        <begin position="205"/>
        <end position="225"/>
    </location>
</feature>
<feature type="repeat" description="LRR 10">
    <location>
        <begin position="229"/>
        <end position="250"/>
    </location>
</feature>
<feature type="repeat" description="LRR 11">
    <location>
        <begin position="251"/>
        <end position="272"/>
    </location>
</feature>
<feature type="repeat" description="LRR 12">
    <location>
        <begin position="273"/>
        <end position="294"/>
    </location>
</feature>
<feature type="domain" description="LRRCT">
    <location>
        <begin position="306"/>
        <end position="336"/>
    </location>
</feature>
<feature type="region of interest" description="Disordered" evidence="2">
    <location>
        <begin position="1"/>
        <end position="24"/>
    </location>
</feature>
<feature type="compositionally biased region" description="Low complexity" evidence="2">
    <location>
        <begin position="1"/>
        <end position="10"/>
    </location>
</feature>
<feature type="compositionally biased region" description="Basic and acidic residues" evidence="2">
    <location>
        <begin position="11"/>
        <end position="21"/>
    </location>
</feature>